<name>CK1_ARATH</name>
<sequence>MAIKTKTSLIPSCSSPEDLKRVLQTLGSSWGDVVEDLERLEVVPLKGAMTNEVYQINWPTLNGEDVHRKVLVRIYGDGVDLFFNRGDEIKTFECMSHHGYGPKLLGRFSDGRLEEFIHARTLSADDLRVAETSDFIAAKLREFHKLDMPGPKNVLLWERLRTWLKEAKNLASPIEMDKYRLEGLENEINLLEERLTRDDQEIGFCHNDLQYGNVMIDEVTNAITIIDYEYSSFNPIAYDIANHFCEMAANYHSDTPHVLDYTLYPGEGERRRFISTYLGSTGNATSDKEVERLLKDAESYTLANHIFWGLWGIISGHVNKIEFDYMEYARQRFEQYWLRKPLLLEG</sequence>
<gene>
    <name type="primary">CK1</name>
    <name type="synonym">CK</name>
    <name type="ordered locus">At1g71697</name>
    <name type="ORF">F14O23.8</name>
    <name type="ORF">F26A9.3</name>
</gene>
<organism>
    <name type="scientific">Arabidopsis thaliana</name>
    <name type="common">Mouse-ear cress</name>
    <dbReference type="NCBI Taxonomy" id="3702"/>
    <lineage>
        <taxon>Eukaryota</taxon>
        <taxon>Viridiplantae</taxon>
        <taxon>Streptophyta</taxon>
        <taxon>Embryophyta</taxon>
        <taxon>Tracheophyta</taxon>
        <taxon>Spermatophyta</taxon>
        <taxon>Magnoliopsida</taxon>
        <taxon>eudicotyledons</taxon>
        <taxon>Gunneridae</taxon>
        <taxon>Pentapetalae</taxon>
        <taxon>rosids</taxon>
        <taxon>malvids</taxon>
        <taxon>Brassicales</taxon>
        <taxon>Brassicaceae</taxon>
        <taxon>Camelineae</taxon>
        <taxon>Arabidopsis</taxon>
    </lineage>
</organism>
<reference key="1">
    <citation type="journal article" date="2000" name="Nature">
        <title>Sequence and analysis of chromosome 1 of the plant Arabidopsis thaliana.</title>
        <authorList>
            <person name="Theologis A."/>
            <person name="Ecker J.R."/>
            <person name="Palm C.J."/>
            <person name="Federspiel N.A."/>
            <person name="Kaul S."/>
            <person name="White O."/>
            <person name="Alonso J."/>
            <person name="Altafi H."/>
            <person name="Araujo R."/>
            <person name="Bowman C.L."/>
            <person name="Brooks S.Y."/>
            <person name="Buehler E."/>
            <person name="Chan A."/>
            <person name="Chao Q."/>
            <person name="Chen H."/>
            <person name="Cheuk R.F."/>
            <person name="Chin C.W."/>
            <person name="Chung M.K."/>
            <person name="Conn L."/>
            <person name="Conway A.B."/>
            <person name="Conway A.R."/>
            <person name="Creasy T.H."/>
            <person name="Dewar K."/>
            <person name="Dunn P."/>
            <person name="Etgu P."/>
            <person name="Feldblyum T.V."/>
            <person name="Feng J.-D."/>
            <person name="Fong B."/>
            <person name="Fujii C.Y."/>
            <person name="Gill J.E."/>
            <person name="Goldsmith A.D."/>
            <person name="Haas B."/>
            <person name="Hansen N.F."/>
            <person name="Hughes B."/>
            <person name="Huizar L."/>
            <person name="Hunter J.L."/>
            <person name="Jenkins J."/>
            <person name="Johnson-Hopson C."/>
            <person name="Khan S."/>
            <person name="Khaykin E."/>
            <person name="Kim C.J."/>
            <person name="Koo H.L."/>
            <person name="Kremenetskaia I."/>
            <person name="Kurtz D.B."/>
            <person name="Kwan A."/>
            <person name="Lam B."/>
            <person name="Langin-Hooper S."/>
            <person name="Lee A."/>
            <person name="Lee J.M."/>
            <person name="Lenz C.A."/>
            <person name="Li J.H."/>
            <person name="Li Y.-P."/>
            <person name="Lin X."/>
            <person name="Liu S.X."/>
            <person name="Liu Z.A."/>
            <person name="Luros J.S."/>
            <person name="Maiti R."/>
            <person name="Marziali A."/>
            <person name="Militscher J."/>
            <person name="Miranda M."/>
            <person name="Nguyen M."/>
            <person name="Nierman W.C."/>
            <person name="Osborne B.I."/>
            <person name="Pai G."/>
            <person name="Peterson J."/>
            <person name="Pham P.K."/>
            <person name="Rizzo M."/>
            <person name="Rooney T."/>
            <person name="Rowley D."/>
            <person name="Sakano H."/>
            <person name="Salzberg S.L."/>
            <person name="Schwartz J.R."/>
            <person name="Shinn P."/>
            <person name="Southwick A.M."/>
            <person name="Sun H."/>
            <person name="Tallon L.J."/>
            <person name="Tambunga G."/>
            <person name="Toriumi M.J."/>
            <person name="Town C.D."/>
            <person name="Utterback T."/>
            <person name="Van Aken S."/>
            <person name="Vaysberg M."/>
            <person name="Vysotskaia V.S."/>
            <person name="Walker M."/>
            <person name="Wu D."/>
            <person name="Yu G."/>
            <person name="Fraser C.M."/>
            <person name="Venter J.C."/>
            <person name="Davis R.W."/>
        </authorList>
    </citation>
    <scope>NUCLEOTIDE SEQUENCE [LARGE SCALE GENOMIC DNA]</scope>
    <source>
        <strain>cv. Columbia</strain>
    </source>
</reference>
<reference key="2">
    <citation type="journal article" date="2017" name="Plant J.">
        <title>Araport11: a complete reannotation of the Arabidopsis thaliana reference genome.</title>
        <authorList>
            <person name="Cheng C.Y."/>
            <person name="Krishnakumar V."/>
            <person name="Chan A.P."/>
            <person name="Thibaud-Nissen F."/>
            <person name="Schobel S."/>
            <person name="Town C.D."/>
        </authorList>
    </citation>
    <scope>GENOME REANNOTATION</scope>
    <source>
        <strain>cv. Columbia</strain>
    </source>
</reference>
<reference key="3">
    <citation type="journal article" date="2003" name="Science">
        <title>Empirical analysis of transcriptional activity in the Arabidopsis genome.</title>
        <authorList>
            <person name="Yamada K."/>
            <person name="Lim J."/>
            <person name="Dale J.M."/>
            <person name="Chen H."/>
            <person name="Shinn P."/>
            <person name="Palm C.J."/>
            <person name="Southwick A.M."/>
            <person name="Wu H.C."/>
            <person name="Kim C.J."/>
            <person name="Nguyen M."/>
            <person name="Pham P.K."/>
            <person name="Cheuk R.F."/>
            <person name="Karlin-Newmann G."/>
            <person name="Liu S.X."/>
            <person name="Lam B."/>
            <person name="Sakano H."/>
            <person name="Wu T."/>
            <person name="Yu G."/>
            <person name="Miranda M."/>
            <person name="Quach H.L."/>
            <person name="Tripp M."/>
            <person name="Chang C.H."/>
            <person name="Lee J.M."/>
            <person name="Toriumi M.J."/>
            <person name="Chan M.M."/>
            <person name="Tang C.C."/>
            <person name="Onodera C.S."/>
            <person name="Deng J.M."/>
            <person name="Akiyama K."/>
            <person name="Ansari Y."/>
            <person name="Arakawa T."/>
            <person name="Banh J."/>
            <person name="Banno F."/>
            <person name="Bowser L."/>
            <person name="Brooks S.Y."/>
            <person name="Carninci P."/>
            <person name="Chao Q."/>
            <person name="Choy N."/>
            <person name="Enju A."/>
            <person name="Goldsmith A.D."/>
            <person name="Gurjal M."/>
            <person name="Hansen N.F."/>
            <person name="Hayashizaki Y."/>
            <person name="Johnson-Hopson C."/>
            <person name="Hsuan V.W."/>
            <person name="Iida K."/>
            <person name="Karnes M."/>
            <person name="Khan S."/>
            <person name="Koesema E."/>
            <person name="Ishida J."/>
            <person name="Jiang P.X."/>
            <person name="Jones T."/>
            <person name="Kawai J."/>
            <person name="Kamiya A."/>
            <person name="Meyers C."/>
            <person name="Nakajima M."/>
            <person name="Narusaka M."/>
            <person name="Seki M."/>
            <person name="Sakurai T."/>
            <person name="Satou M."/>
            <person name="Tamse R."/>
            <person name="Vaysberg M."/>
            <person name="Wallender E.K."/>
            <person name="Wong C."/>
            <person name="Yamamura Y."/>
            <person name="Yuan S."/>
            <person name="Shinozaki K."/>
            <person name="Davis R.W."/>
            <person name="Theologis A."/>
            <person name="Ecker J.R."/>
        </authorList>
    </citation>
    <scope>NUCLEOTIDE SEQUENCE [LARGE SCALE MRNA]</scope>
    <source>
        <strain>cv. Columbia</strain>
    </source>
</reference>
<reference key="4">
    <citation type="submission" date="2006-07" db="EMBL/GenBank/DDBJ databases">
        <title>Large-scale analysis of RIKEN Arabidopsis full-length (RAFL) cDNAs.</title>
        <authorList>
            <person name="Totoki Y."/>
            <person name="Seki M."/>
            <person name="Ishida J."/>
            <person name="Nakajima M."/>
            <person name="Enju A."/>
            <person name="Kamiya A."/>
            <person name="Narusaka M."/>
            <person name="Shin-i T."/>
            <person name="Nakagawa M."/>
            <person name="Sakamoto N."/>
            <person name="Oishi K."/>
            <person name="Kohara Y."/>
            <person name="Kobayashi M."/>
            <person name="Toyoda A."/>
            <person name="Sakaki Y."/>
            <person name="Sakurai T."/>
            <person name="Iida K."/>
            <person name="Akiyama K."/>
            <person name="Satou M."/>
            <person name="Toyoda T."/>
            <person name="Konagaya A."/>
            <person name="Carninci P."/>
            <person name="Kawai J."/>
            <person name="Hayashizaki Y."/>
            <person name="Shinozaki K."/>
        </authorList>
    </citation>
    <scope>NUCLEOTIDE SEQUENCE [LARGE SCALE MRNA]</scope>
    <source>
        <strain>cv. Columbia</strain>
    </source>
</reference>
<reference key="5">
    <citation type="journal article" date="1997" name="Plant Physiol.">
        <title>Jasmonic acid-dependent and -independent signaling pathways control wound-induced gene activation in Arabidopsis thaliana.</title>
        <authorList>
            <person name="Titarenko E."/>
            <person name="Rojo E."/>
            <person name="Leon J."/>
            <person name="Sanchez-Serrano J.J."/>
        </authorList>
    </citation>
    <scope>TISSUE SPECIFICITY</scope>
    <scope>INDUCTION BY WOUNDING</scope>
</reference>
<reference key="6">
    <citation type="journal article" date="2004" name="FEBS Lett.">
        <title>Regulation of phosphatidylcholine biosynthesis under salt stress involves choline kinases in Arabidopsis thaliana.</title>
        <authorList>
            <person name="Tasseva G."/>
            <person name="Richard L."/>
            <person name="Zachowski A."/>
        </authorList>
    </citation>
    <scope>INDUCTION</scope>
</reference>
<dbReference type="EC" id="2.7.1.32"/>
<dbReference type="EMBL" id="AC012654">
    <property type="protein sequence ID" value="AAF43223.1"/>
    <property type="molecule type" value="Genomic_DNA"/>
</dbReference>
<dbReference type="EMBL" id="AC016163">
    <property type="protein sequence ID" value="AAG51828.1"/>
    <property type="status" value="ALT_SEQ"/>
    <property type="molecule type" value="Genomic_DNA"/>
</dbReference>
<dbReference type="EMBL" id="CP002684">
    <property type="protein sequence ID" value="AEE35220.1"/>
    <property type="molecule type" value="Genomic_DNA"/>
</dbReference>
<dbReference type="EMBL" id="BT008311">
    <property type="protein sequence ID" value="AAP37670.1"/>
    <property type="molecule type" value="mRNA"/>
</dbReference>
<dbReference type="EMBL" id="AK229787">
    <property type="protein sequence ID" value="BAF01619.1"/>
    <property type="molecule type" value="mRNA"/>
</dbReference>
<dbReference type="EMBL" id="AK230407">
    <property type="protein sequence ID" value="BAF02205.1"/>
    <property type="molecule type" value="mRNA"/>
</dbReference>
<dbReference type="PIR" id="C96739">
    <property type="entry name" value="C96739"/>
</dbReference>
<dbReference type="RefSeq" id="NP_177315.1">
    <property type="nucleotide sequence ID" value="NM_105828.4"/>
</dbReference>
<dbReference type="SMR" id="Q9M9H6"/>
<dbReference type="BioGRID" id="28720">
    <property type="interactions" value="1"/>
</dbReference>
<dbReference type="FunCoup" id="Q9M9H6">
    <property type="interactions" value="252"/>
</dbReference>
<dbReference type="IntAct" id="Q9M9H6">
    <property type="interactions" value="1"/>
</dbReference>
<dbReference type="STRING" id="3702.Q9M9H6"/>
<dbReference type="iPTMnet" id="Q9M9H6"/>
<dbReference type="PaxDb" id="3702-AT1G71697.1"/>
<dbReference type="ProteomicsDB" id="246868"/>
<dbReference type="EnsemblPlants" id="AT1G71697.1">
    <property type="protein sequence ID" value="AT1G71697.1"/>
    <property type="gene ID" value="AT1G71697"/>
</dbReference>
<dbReference type="GeneID" id="843500"/>
<dbReference type="Gramene" id="AT1G71697.1">
    <property type="protein sequence ID" value="AT1G71697.1"/>
    <property type="gene ID" value="AT1G71697"/>
</dbReference>
<dbReference type="KEGG" id="ath:AT1G71697"/>
<dbReference type="Araport" id="AT1G71697"/>
<dbReference type="TAIR" id="AT1G71697">
    <property type="gene designation" value="CK1"/>
</dbReference>
<dbReference type="eggNOG" id="KOG2686">
    <property type="taxonomic scope" value="Eukaryota"/>
</dbReference>
<dbReference type="HOGENOM" id="CLU_012712_0_2_1"/>
<dbReference type="InParanoid" id="Q9M9H6"/>
<dbReference type="OMA" id="LWQKMHS"/>
<dbReference type="PhylomeDB" id="Q9M9H6"/>
<dbReference type="BioCyc" id="ARA:AT1G71697-MONOMER"/>
<dbReference type="BRENDA" id="2.7.1.32">
    <property type="organism ID" value="399"/>
</dbReference>
<dbReference type="UniPathway" id="UPA00753">
    <property type="reaction ID" value="UER00737"/>
</dbReference>
<dbReference type="PRO" id="PR:Q9M9H6"/>
<dbReference type="Proteomes" id="UP000006548">
    <property type="component" value="Chromosome 1"/>
</dbReference>
<dbReference type="ExpressionAtlas" id="Q9M9H6">
    <property type="expression patterns" value="baseline and differential"/>
</dbReference>
<dbReference type="GO" id="GO:0005524">
    <property type="term" value="F:ATP binding"/>
    <property type="evidence" value="ECO:0007669"/>
    <property type="project" value="UniProtKB-KW"/>
</dbReference>
<dbReference type="GO" id="GO:0004103">
    <property type="term" value="F:choline kinase activity"/>
    <property type="evidence" value="ECO:0000250"/>
    <property type="project" value="TAIR"/>
</dbReference>
<dbReference type="GO" id="GO:0009611">
    <property type="term" value="P:response to wounding"/>
    <property type="evidence" value="ECO:0000270"/>
    <property type="project" value="TAIR"/>
</dbReference>
<dbReference type="CDD" id="cd05157">
    <property type="entry name" value="ETNK_euk"/>
    <property type="match status" value="1"/>
</dbReference>
<dbReference type="Gene3D" id="3.90.1200.10">
    <property type="match status" value="1"/>
</dbReference>
<dbReference type="Gene3D" id="3.30.200.20">
    <property type="entry name" value="Phosphorylase Kinase, domain 1"/>
    <property type="match status" value="1"/>
</dbReference>
<dbReference type="InterPro" id="IPR007521">
    <property type="entry name" value="Choline_kin_N"/>
</dbReference>
<dbReference type="InterPro" id="IPR011009">
    <property type="entry name" value="Kinase-like_dom_sf"/>
</dbReference>
<dbReference type="PANTHER" id="PTHR22603">
    <property type="entry name" value="CHOLINE/ETHANOALAMINE KINASE"/>
    <property type="match status" value="1"/>
</dbReference>
<dbReference type="PANTHER" id="PTHR22603:SF93">
    <property type="entry name" value="RE24176P"/>
    <property type="match status" value="1"/>
</dbReference>
<dbReference type="Pfam" id="PF04428">
    <property type="entry name" value="Choline_kin_N"/>
    <property type="match status" value="1"/>
</dbReference>
<dbReference type="Pfam" id="PF01633">
    <property type="entry name" value="Choline_kinase"/>
    <property type="match status" value="1"/>
</dbReference>
<dbReference type="SUPFAM" id="SSF56112">
    <property type="entry name" value="Protein kinase-like (PK-like)"/>
    <property type="match status" value="1"/>
</dbReference>
<proteinExistence type="evidence at transcript level"/>
<comment type="function">
    <text evidence="1">Involved in phospholipid biosynthesis. Catalyzes the first step in phosphatidylcholine biosynthesis (By similarity).</text>
</comment>
<comment type="catalytic activity">
    <reaction>
        <text>choline + ATP = phosphocholine + ADP + H(+)</text>
        <dbReference type="Rhea" id="RHEA:12837"/>
        <dbReference type="ChEBI" id="CHEBI:15354"/>
        <dbReference type="ChEBI" id="CHEBI:15378"/>
        <dbReference type="ChEBI" id="CHEBI:30616"/>
        <dbReference type="ChEBI" id="CHEBI:295975"/>
        <dbReference type="ChEBI" id="CHEBI:456216"/>
        <dbReference type="EC" id="2.7.1.32"/>
    </reaction>
</comment>
<comment type="pathway">
    <text>Phospholipid metabolism; phosphatidylcholine biosynthesis; phosphocholine from choline: step 1/1.</text>
</comment>
<comment type="tissue specificity">
    <text evidence="3">Expressed in roots. Expressed at low levels in cauline leaves and flowers.</text>
</comment>
<comment type="induction">
    <text evidence="2 3">By wounding, and salt and osmotic stresses.</text>
</comment>
<comment type="similarity">
    <text evidence="4">Belongs to the choline/ethanolamine kinase family.</text>
</comment>
<comment type="sequence caution" evidence="4">
    <conflict type="erroneous gene model prediction">
        <sequence resource="EMBL-CDS" id="AAG51828"/>
    </conflict>
</comment>
<accession>Q9M9H6</accession>
<accession>Q9C9J3</accession>
<feature type="chain" id="PRO_0000423346" description="Probable choline kinase 1">
    <location>
        <begin position="1"/>
        <end position="346"/>
    </location>
</feature>
<feature type="binding site" evidence="1">
    <location>
        <position position="73"/>
    </location>
    <ligand>
        <name>ATP</name>
        <dbReference type="ChEBI" id="CHEBI:30616"/>
    </ligand>
</feature>
<feature type="binding site" evidence="1">
    <location>
        <position position="210"/>
    </location>
    <ligand>
        <name>ATP</name>
        <dbReference type="ChEBI" id="CHEBI:30616"/>
    </ligand>
</feature>
<feature type="binding site" evidence="1">
    <location>
        <position position="227"/>
    </location>
    <ligand>
        <name>ATP</name>
        <dbReference type="ChEBI" id="CHEBI:30616"/>
    </ligand>
</feature>
<evidence type="ECO:0000250" key="1"/>
<evidence type="ECO:0000269" key="2">
    <source>
    </source>
</evidence>
<evidence type="ECO:0000269" key="3">
    <source>
    </source>
</evidence>
<evidence type="ECO:0000305" key="4"/>
<keyword id="KW-0067">ATP-binding</keyword>
<keyword id="KW-0418">Kinase</keyword>
<keyword id="KW-0444">Lipid biosynthesis</keyword>
<keyword id="KW-0443">Lipid metabolism</keyword>
<keyword id="KW-0547">Nucleotide-binding</keyword>
<keyword id="KW-0594">Phospholipid biosynthesis</keyword>
<keyword id="KW-1208">Phospholipid metabolism</keyword>
<keyword id="KW-1185">Reference proteome</keyword>
<keyword id="KW-0808">Transferase</keyword>
<protein>
    <recommendedName>
        <fullName>Probable choline kinase 1</fullName>
        <shortName>AtCK1</shortName>
        <ecNumber>2.7.1.32</ecNumber>
    </recommendedName>
</protein>